<keyword id="KW-0150">Chloroplast</keyword>
<keyword id="KW-0934">Plastid</keyword>
<keyword id="KW-0687">Ribonucleoprotein</keyword>
<keyword id="KW-0689">Ribosomal protein</keyword>
<keyword id="KW-0694">RNA-binding</keyword>
<keyword id="KW-0699">rRNA-binding</keyword>
<proteinExistence type="inferred from homology"/>
<evidence type="ECO:0000255" key="1">
    <source>
        <dbReference type="HAMAP-Rule" id="MF_01310"/>
    </source>
</evidence>
<evidence type="ECO:0000305" key="2"/>
<protein>
    <recommendedName>
        <fullName evidence="1">Small ribosomal subunit protein uS11c</fullName>
    </recommendedName>
    <alternativeName>
        <fullName evidence="2">30S ribosomal protein S11, chloroplastic</fullName>
    </alternativeName>
</protein>
<geneLocation type="chloroplast"/>
<name>RR11_GNEPA</name>
<reference key="1">
    <citation type="journal article" date="2007" name="Mol. Biol. Evol.">
        <title>Chloroplast genome (cpDNA) of Cycas taitungensis and 56 cp protein-coding genes of Gnetum parvifolium: insights into cpDNA evolution and phylogeny of extant seed plants.</title>
        <authorList>
            <person name="Wu C.-S."/>
            <person name="Wang Y.-N."/>
            <person name="Liu S.-M."/>
            <person name="Chaw S.-M."/>
        </authorList>
    </citation>
    <scope>NUCLEOTIDE SEQUENCE [LARGE SCALE GENOMIC DNA]</scope>
</reference>
<reference key="2">
    <citation type="journal article" date="2009" name="Mol. Phylogenet. Evol.">
        <title>Evolution of reduced and compact chloroplast genomes (cpDNAs) in gnetophytes: Selection toward a lower-cost strategy.</title>
        <authorList>
            <person name="Wu C.-S."/>
            <person name="Lai Y.-T."/>
            <person name="Lin C.-P."/>
            <person name="Wang Y.-N."/>
            <person name="Chaw S.-M."/>
        </authorList>
    </citation>
    <scope>NUCLEOTIDE SEQUENCE [LARGE SCALE GENOMIC DNA]</scope>
</reference>
<sequence length="132" mass="14476">MALTKPKKIPRYRRNKPEIRKVDKGIIHIRASFNNTIITVTNVLGCVISWSSAGACGFKGPKKGSAFAAQKATENVIRMVVINRATVLITGCGKGRDAALRVIHQNYIPIHAVLDVTPTPHNGCRPPVKRRI</sequence>
<feature type="chain" id="PRO_0000323365" description="Small ribosomal subunit protein uS11c">
    <location>
        <begin position="1"/>
        <end position="132"/>
    </location>
</feature>
<dbReference type="EMBL" id="AB295953">
    <property type="protein sequence ID" value="BAF64902.1"/>
    <property type="molecule type" value="Genomic_DNA"/>
</dbReference>
<dbReference type="EMBL" id="AP009569">
    <property type="protein sequence ID" value="BAH11262.1"/>
    <property type="molecule type" value="Genomic_DNA"/>
</dbReference>
<dbReference type="RefSeq" id="YP_002519752.1">
    <property type="nucleotide sequence ID" value="NC_011942.1"/>
</dbReference>
<dbReference type="SMR" id="A6BM57"/>
<dbReference type="GeneID" id="7368142"/>
<dbReference type="GO" id="GO:0009507">
    <property type="term" value="C:chloroplast"/>
    <property type="evidence" value="ECO:0007669"/>
    <property type="project" value="UniProtKB-SubCell"/>
</dbReference>
<dbReference type="GO" id="GO:1990904">
    <property type="term" value="C:ribonucleoprotein complex"/>
    <property type="evidence" value="ECO:0007669"/>
    <property type="project" value="UniProtKB-KW"/>
</dbReference>
<dbReference type="GO" id="GO:0005840">
    <property type="term" value="C:ribosome"/>
    <property type="evidence" value="ECO:0007669"/>
    <property type="project" value="UniProtKB-KW"/>
</dbReference>
<dbReference type="GO" id="GO:0019843">
    <property type="term" value="F:rRNA binding"/>
    <property type="evidence" value="ECO:0007669"/>
    <property type="project" value="UniProtKB-UniRule"/>
</dbReference>
<dbReference type="GO" id="GO:0003735">
    <property type="term" value="F:structural constituent of ribosome"/>
    <property type="evidence" value="ECO:0007669"/>
    <property type="project" value="InterPro"/>
</dbReference>
<dbReference type="GO" id="GO:0006412">
    <property type="term" value="P:translation"/>
    <property type="evidence" value="ECO:0007669"/>
    <property type="project" value="UniProtKB-UniRule"/>
</dbReference>
<dbReference type="Gene3D" id="3.30.420.80">
    <property type="entry name" value="Ribosomal protein S11"/>
    <property type="match status" value="1"/>
</dbReference>
<dbReference type="HAMAP" id="MF_01310">
    <property type="entry name" value="Ribosomal_uS11"/>
    <property type="match status" value="1"/>
</dbReference>
<dbReference type="InterPro" id="IPR001971">
    <property type="entry name" value="Ribosomal_uS11"/>
</dbReference>
<dbReference type="InterPro" id="IPR036967">
    <property type="entry name" value="Ribosomal_uS11_sf"/>
</dbReference>
<dbReference type="NCBIfam" id="NF003698">
    <property type="entry name" value="PRK05309.1"/>
    <property type="match status" value="1"/>
</dbReference>
<dbReference type="PANTHER" id="PTHR11759">
    <property type="entry name" value="40S RIBOSOMAL PROTEIN S14/30S RIBOSOMAL PROTEIN S11"/>
    <property type="match status" value="1"/>
</dbReference>
<dbReference type="Pfam" id="PF00411">
    <property type="entry name" value="Ribosomal_S11"/>
    <property type="match status" value="1"/>
</dbReference>
<dbReference type="PIRSF" id="PIRSF002131">
    <property type="entry name" value="Ribosomal_S11"/>
    <property type="match status" value="1"/>
</dbReference>
<dbReference type="SUPFAM" id="SSF53137">
    <property type="entry name" value="Translational machinery components"/>
    <property type="match status" value="1"/>
</dbReference>
<accession>A6BM57</accession>
<accession>B7ZI82</accession>
<organism>
    <name type="scientific">Gnetum parvifolium</name>
    <name type="common">Small-leaved jointfir</name>
    <name type="synonym">Gnetum scandens var. parvifolium</name>
    <dbReference type="NCBI Taxonomy" id="33153"/>
    <lineage>
        <taxon>Eukaryota</taxon>
        <taxon>Viridiplantae</taxon>
        <taxon>Streptophyta</taxon>
        <taxon>Embryophyta</taxon>
        <taxon>Tracheophyta</taxon>
        <taxon>Spermatophyta</taxon>
        <taxon>Gnetopsida</taxon>
        <taxon>Gnetidae</taxon>
        <taxon>Gnetales</taxon>
        <taxon>Gnetaceae</taxon>
        <taxon>Gnetum</taxon>
    </lineage>
</organism>
<comment type="subunit">
    <text evidence="1">Part of the 30S ribosomal subunit.</text>
</comment>
<comment type="subcellular location">
    <subcellularLocation>
        <location>Plastid</location>
        <location>Chloroplast</location>
    </subcellularLocation>
</comment>
<comment type="similarity">
    <text evidence="1">Belongs to the universal ribosomal protein uS11 family.</text>
</comment>
<gene>
    <name evidence="1" type="primary">rps11</name>
</gene>